<reference key="1">
    <citation type="journal article" date="1998" name="DNA Res.">
        <title>Complete sequence and gene organization of the genome of a hyper-thermophilic archaebacterium, Pyrococcus horikoshii OT3.</title>
        <authorList>
            <person name="Kawarabayasi Y."/>
            <person name="Sawada M."/>
            <person name="Horikawa H."/>
            <person name="Haikawa Y."/>
            <person name="Hino Y."/>
            <person name="Yamamoto S."/>
            <person name="Sekine M."/>
            <person name="Baba S."/>
            <person name="Kosugi H."/>
            <person name="Hosoyama A."/>
            <person name="Nagai Y."/>
            <person name="Sakai M."/>
            <person name="Ogura K."/>
            <person name="Otsuka R."/>
            <person name="Nakazawa H."/>
            <person name="Takamiya M."/>
            <person name="Ohfuku Y."/>
            <person name="Funahashi T."/>
            <person name="Tanaka T."/>
            <person name="Kudoh Y."/>
            <person name="Yamazaki J."/>
            <person name="Kushida N."/>
            <person name="Oguchi A."/>
            <person name="Aoki K."/>
            <person name="Yoshizawa T."/>
            <person name="Nakamura Y."/>
            <person name="Robb F.T."/>
            <person name="Horikoshi K."/>
            <person name="Masuchi Y."/>
            <person name="Shizuya H."/>
            <person name="Kikuchi H."/>
        </authorList>
    </citation>
    <scope>NUCLEOTIDE SEQUENCE [LARGE SCALE GENOMIC DNA]</scope>
    <source>
        <strain>ATCC 700860 / DSM 12428 / JCM 9974 / NBRC 100139 / OT-3</strain>
    </source>
</reference>
<accession>O57948</accession>
<feature type="chain" id="PRO_0000145098" description="UPF0146 protein PH0209">
    <location>
        <begin position="1"/>
        <end position="131"/>
    </location>
</feature>
<proteinExistence type="inferred from homology"/>
<sequence length="131" mass="14866">MIEVAEIIAREIRRGKIVEIGVGFYLEVAKRLRESGIDILVVDINEKAINYARKQGIKGVVDDIFNPTLGIYKDAKAIYSIRPAPEMMKPLLDLARKLKIPLYIVPLTGDRTPNGMKLINYKGIPIYKWEP</sequence>
<protein>
    <recommendedName>
        <fullName>UPF0146 protein PH0209</fullName>
    </recommendedName>
</protein>
<evidence type="ECO:0000305" key="1"/>
<name>Y209_PYRHO</name>
<organism>
    <name type="scientific">Pyrococcus horikoshii (strain ATCC 700860 / DSM 12428 / JCM 9974 / NBRC 100139 / OT-3)</name>
    <dbReference type="NCBI Taxonomy" id="70601"/>
    <lineage>
        <taxon>Archaea</taxon>
        <taxon>Methanobacteriati</taxon>
        <taxon>Methanobacteriota</taxon>
        <taxon>Thermococci</taxon>
        <taxon>Thermococcales</taxon>
        <taxon>Thermococcaceae</taxon>
        <taxon>Pyrococcus</taxon>
    </lineage>
</organism>
<comment type="similarity">
    <text evidence="1">Belongs to the UPF0146 family.</text>
</comment>
<gene>
    <name type="ordered locus">PH0209</name>
</gene>
<dbReference type="EMBL" id="BA000001">
    <property type="protein sequence ID" value="BAA29278.1"/>
    <property type="molecule type" value="Genomic_DNA"/>
</dbReference>
<dbReference type="PIR" id="G71243">
    <property type="entry name" value="G71243"/>
</dbReference>
<dbReference type="RefSeq" id="WP_010884316.1">
    <property type="nucleotide sequence ID" value="NC_000961.1"/>
</dbReference>
<dbReference type="SMR" id="O57948"/>
<dbReference type="STRING" id="70601.gene:9377119"/>
<dbReference type="DNASU" id="1444098"/>
<dbReference type="EnsemblBacteria" id="BAA29278">
    <property type="protein sequence ID" value="BAA29278"/>
    <property type="gene ID" value="BAA29278"/>
</dbReference>
<dbReference type="GeneID" id="1444098"/>
<dbReference type="KEGG" id="pho:PH0209"/>
<dbReference type="eggNOG" id="arCOG04385">
    <property type="taxonomic scope" value="Archaea"/>
</dbReference>
<dbReference type="OrthoDB" id="59816at2157"/>
<dbReference type="Proteomes" id="UP000000752">
    <property type="component" value="Chromosome"/>
</dbReference>
<dbReference type="Gene3D" id="3.40.50.150">
    <property type="entry name" value="Vaccinia Virus protein VP39"/>
    <property type="match status" value="1"/>
</dbReference>
<dbReference type="HAMAP" id="MF_00341">
    <property type="entry name" value="UPF0146"/>
    <property type="match status" value="1"/>
</dbReference>
<dbReference type="InterPro" id="IPR029063">
    <property type="entry name" value="SAM-dependent_MTases_sf"/>
</dbReference>
<dbReference type="InterPro" id="IPR005353">
    <property type="entry name" value="UPF0146"/>
</dbReference>
<dbReference type="NCBIfam" id="NF003165">
    <property type="entry name" value="PRK04148.1"/>
    <property type="match status" value="1"/>
</dbReference>
<dbReference type="Pfam" id="PF03686">
    <property type="entry name" value="UPF0146"/>
    <property type="match status" value="1"/>
</dbReference>
<dbReference type="PIRSF" id="PIRSF016725">
    <property type="entry name" value="UCP016725"/>
    <property type="match status" value="1"/>
</dbReference>
<dbReference type="SUPFAM" id="SSF53335">
    <property type="entry name" value="S-adenosyl-L-methionine-dependent methyltransferases"/>
    <property type="match status" value="1"/>
</dbReference>